<protein>
    <recommendedName>
        <fullName evidence="1">Alanine racemase</fullName>
        <ecNumber evidence="1">5.1.1.1</ecNumber>
    </recommendedName>
</protein>
<proteinExistence type="inferred from homology"/>
<organism>
    <name type="scientific">Pseudomonas entomophila (strain L48)</name>
    <dbReference type="NCBI Taxonomy" id="384676"/>
    <lineage>
        <taxon>Bacteria</taxon>
        <taxon>Pseudomonadati</taxon>
        <taxon>Pseudomonadota</taxon>
        <taxon>Gammaproteobacteria</taxon>
        <taxon>Pseudomonadales</taxon>
        <taxon>Pseudomonadaceae</taxon>
        <taxon>Pseudomonas</taxon>
    </lineage>
</organism>
<feature type="chain" id="PRO_1000066027" description="Alanine racemase">
    <location>
        <begin position="1"/>
        <end position="357"/>
    </location>
</feature>
<feature type="active site" description="Proton acceptor; specific for D-alanine" evidence="1">
    <location>
        <position position="33"/>
    </location>
</feature>
<feature type="active site" description="Proton acceptor; specific for L-alanine" evidence="1">
    <location>
        <position position="253"/>
    </location>
</feature>
<feature type="binding site" evidence="1">
    <location>
        <position position="129"/>
    </location>
    <ligand>
        <name>substrate</name>
    </ligand>
</feature>
<feature type="binding site" evidence="1">
    <location>
        <position position="301"/>
    </location>
    <ligand>
        <name>substrate</name>
    </ligand>
</feature>
<feature type="modified residue" description="N6-(pyridoxal phosphate)lysine" evidence="1">
    <location>
        <position position="33"/>
    </location>
</feature>
<reference key="1">
    <citation type="journal article" date="2006" name="Nat. Biotechnol.">
        <title>Complete genome sequence of the entomopathogenic and metabolically versatile soil bacterium Pseudomonas entomophila.</title>
        <authorList>
            <person name="Vodovar N."/>
            <person name="Vallenet D."/>
            <person name="Cruveiller S."/>
            <person name="Rouy Z."/>
            <person name="Barbe V."/>
            <person name="Acosta C."/>
            <person name="Cattolico L."/>
            <person name="Jubin C."/>
            <person name="Lajus A."/>
            <person name="Segurens B."/>
            <person name="Vacherie B."/>
            <person name="Wincker P."/>
            <person name="Weissenbach J."/>
            <person name="Lemaitre B."/>
            <person name="Medigue C."/>
            <person name="Boccard F."/>
        </authorList>
    </citation>
    <scope>NUCLEOTIDE SEQUENCE [LARGE SCALE GENOMIC DNA]</scope>
    <source>
        <strain>L48</strain>
    </source>
</reference>
<dbReference type="EC" id="5.1.1.1" evidence="1"/>
<dbReference type="EMBL" id="CT573326">
    <property type="protein sequence ID" value="CAK18029.1"/>
    <property type="molecule type" value="Genomic_DNA"/>
</dbReference>
<dbReference type="RefSeq" id="WP_011536385.1">
    <property type="nucleotide sequence ID" value="NC_008027.1"/>
</dbReference>
<dbReference type="SMR" id="Q1I2V7"/>
<dbReference type="STRING" id="384676.PSEEN5415"/>
<dbReference type="GeneID" id="32808323"/>
<dbReference type="KEGG" id="pen:PSEEN5415"/>
<dbReference type="eggNOG" id="COG0787">
    <property type="taxonomic scope" value="Bacteria"/>
</dbReference>
<dbReference type="HOGENOM" id="CLU_028393_1_0_6"/>
<dbReference type="OrthoDB" id="9813814at2"/>
<dbReference type="UniPathway" id="UPA00042">
    <property type="reaction ID" value="UER00497"/>
</dbReference>
<dbReference type="Proteomes" id="UP000000658">
    <property type="component" value="Chromosome"/>
</dbReference>
<dbReference type="GO" id="GO:0005829">
    <property type="term" value="C:cytosol"/>
    <property type="evidence" value="ECO:0007669"/>
    <property type="project" value="TreeGrafter"/>
</dbReference>
<dbReference type="GO" id="GO:0008784">
    <property type="term" value="F:alanine racemase activity"/>
    <property type="evidence" value="ECO:0007669"/>
    <property type="project" value="UniProtKB-UniRule"/>
</dbReference>
<dbReference type="GO" id="GO:0030170">
    <property type="term" value="F:pyridoxal phosphate binding"/>
    <property type="evidence" value="ECO:0007669"/>
    <property type="project" value="UniProtKB-UniRule"/>
</dbReference>
<dbReference type="GO" id="GO:0030632">
    <property type="term" value="P:D-alanine biosynthetic process"/>
    <property type="evidence" value="ECO:0007669"/>
    <property type="project" value="UniProtKB-UniRule"/>
</dbReference>
<dbReference type="CDD" id="cd06827">
    <property type="entry name" value="PLPDE_III_AR_proteobact"/>
    <property type="match status" value="1"/>
</dbReference>
<dbReference type="FunFam" id="2.40.37.10:FF:000002">
    <property type="entry name" value="Alanine racemase"/>
    <property type="match status" value="1"/>
</dbReference>
<dbReference type="FunFam" id="3.20.20.10:FF:000002">
    <property type="entry name" value="Alanine racemase"/>
    <property type="match status" value="1"/>
</dbReference>
<dbReference type="Gene3D" id="3.20.20.10">
    <property type="entry name" value="Alanine racemase"/>
    <property type="match status" value="1"/>
</dbReference>
<dbReference type="Gene3D" id="2.40.37.10">
    <property type="entry name" value="Lyase, Ornithine Decarboxylase, Chain A, domain 1"/>
    <property type="match status" value="1"/>
</dbReference>
<dbReference type="HAMAP" id="MF_01201">
    <property type="entry name" value="Ala_racemase"/>
    <property type="match status" value="1"/>
</dbReference>
<dbReference type="InterPro" id="IPR000821">
    <property type="entry name" value="Ala_racemase"/>
</dbReference>
<dbReference type="InterPro" id="IPR009006">
    <property type="entry name" value="Ala_racemase/Decarboxylase_C"/>
</dbReference>
<dbReference type="InterPro" id="IPR011079">
    <property type="entry name" value="Ala_racemase_C"/>
</dbReference>
<dbReference type="InterPro" id="IPR001608">
    <property type="entry name" value="Ala_racemase_N"/>
</dbReference>
<dbReference type="InterPro" id="IPR020622">
    <property type="entry name" value="Ala_racemase_pyridoxalP-BS"/>
</dbReference>
<dbReference type="InterPro" id="IPR029066">
    <property type="entry name" value="PLP-binding_barrel"/>
</dbReference>
<dbReference type="NCBIfam" id="TIGR00492">
    <property type="entry name" value="alr"/>
    <property type="match status" value="1"/>
</dbReference>
<dbReference type="PANTHER" id="PTHR30511">
    <property type="entry name" value="ALANINE RACEMASE"/>
    <property type="match status" value="1"/>
</dbReference>
<dbReference type="PANTHER" id="PTHR30511:SF0">
    <property type="entry name" value="ALANINE RACEMASE, CATABOLIC-RELATED"/>
    <property type="match status" value="1"/>
</dbReference>
<dbReference type="Pfam" id="PF00842">
    <property type="entry name" value="Ala_racemase_C"/>
    <property type="match status" value="1"/>
</dbReference>
<dbReference type="Pfam" id="PF01168">
    <property type="entry name" value="Ala_racemase_N"/>
    <property type="match status" value="1"/>
</dbReference>
<dbReference type="PRINTS" id="PR00992">
    <property type="entry name" value="ALARACEMASE"/>
</dbReference>
<dbReference type="SMART" id="SM01005">
    <property type="entry name" value="Ala_racemase_C"/>
    <property type="match status" value="1"/>
</dbReference>
<dbReference type="SUPFAM" id="SSF50621">
    <property type="entry name" value="Alanine racemase C-terminal domain-like"/>
    <property type="match status" value="1"/>
</dbReference>
<dbReference type="SUPFAM" id="SSF51419">
    <property type="entry name" value="PLP-binding barrel"/>
    <property type="match status" value="1"/>
</dbReference>
<dbReference type="PROSITE" id="PS00395">
    <property type="entry name" value="ALANINE_RACEMASE"/>
    <property type="match status" value="1"/>
</dbReference>
<keyword id="KW-0413">Isomerase</keyword>
<keyword id="KW-0663">Pyridoxal phosphate</keyword>
<name>ALR_PSEE4</name>
<accession>Q1I2V7</accession>
<comment type="function">
    <text evidence="1">Catalyzes the interconversion of L-alanine and D-alanine. May also act on other amino acids.</text>
</comment>
<comment type="catalytic activity">
    <reaction evidence="1">
        <text>L-alanine = D-alanine</text>
        <dbReference type="Rhea" id="RHEA:20249"/>
        <dbReference type="ChEBI" id="CHEBI:57416"/>
        <dbReference type="ChEBI" id="CHEBI:57972"/>
        <dbReference type="EC" id="5.1.1.1"/>
    </reaction>
</comment>
<comment type="cofactor">
    <cofactor evidence="1">
        <name>pyridoxal 5'-phosphate</name>
        <dbReference type="ChEBI" id="CHEBI:597326"/>
    </cofactor>
</comment>
<comment type="pathway">
    <text evidence="1">Amino-acid biosynthesis; D-alanine biosynthesis; D-alanine from L-alanine: step 1/1.</text>
</comment>
<comment type="similarity">
    <text evidence="1">Belongs to the alanine racemase family.</text>
</comment>
<gene>
    <name type="primary">alr</name>
    <name type="ordered locus">PSEEN5415</name>
</gene>
<sequence length="357" mass="38747">MRPARALIDLQALRHNYRLARELTGAKALAVVKADAYGHGAVRCALALETEADGFAVACIEEALELRAAGIKAPVLLLEGFFEASELALIAEHDLWCVVHSLWQLEAIEQTPVRKPLTIWLKMDTGMHRVGVHPKDYQDAYQRLLASGKVSRIVLMSHFARADELDAAATEQQVAVFEAARQGLSAECSLRNSPAVLGWPSIKSDWVRPGIMLYGATPFEVAQAEAARLQPVMTLQSRIISVRELPAGEPVGYGAKFISPRPTRVGVVAMGYADGYPRQAPTGTPVVVAGKRTQLIGRVSMDMLCVDLTEVPEATVGSPVELWGKQVLASDVAMQAGTIPYQIFCNLKRVPLDCIGE</sequence>
<evidence type="ECO:0000255" key="1">
    <source>
        <dbReference type="HAMAP-Rule" id="MF_01201"/>
    </source>
</evidence>